<gene>
    <name type="ordered locus">pXO2-33</name>
    <name type="ordered locus">BXB0032</name>
    <name type="ordered locus">GBAA_pXO2_0032</name>
</gene>
<organism>
    <name type="scientific">Bacillus anthracis</name>
    <dbReference type="NCBI Taxonomy" id="1392"/>
    <lineage>
        <taxon>Bacteria</taxon>
        <taxon>Bacillati</taxon>
        <taxon>Bacillota</taxon>
        <taxon>Bacilli</taxon>
        <taxon>Bacillales</taxon>
        <taxon>Bacillaceae</taxon>
        <taxon>Bacillus</taxon>
        <taxon>Bacillus cereus group</taxon>
    </lineage>
</organism>
<keyword id="KW-0614">Plasmid</keyword>
<keyword id="KW-1185">Reference proteome</keyword>
<protein>
    <recommendedName>
        <fullName>Uncharacterized protein pXO2-33/BXB0032/GBAA_pXO2_0032</fullName>
    </recommendedName>
</protein>
<sequence length="176" mass="19931">MSMEYQERYVRKVATILSSKTKHTTGCLIEGESDVCLEFQIELINALQDNHGLVYHLDFNDYTSETDCLAALKKARKQLRSNKQDGKTLFLSLASFERVEKKTMDAVKILIGSRSLGINLVVSANKRFVHLVGLTEYLVTMNKSDVVLSELYRYSTQKILASLKNENVSWGEANES</sequence>
<accession>Q9RMZ9</accession>
<geneLocation type="plasmid">
    <name>pXO2</name>
</geneLocation>
<dbReference type="EMBL" id="AF188935">
    <property type="protein sequence ID" value="AAF13638.1"/>
    <property type="molecule type" value="Genomic_DNA"/>
</dbReference>
<dbReference type="EMBL" id="AE011191">
    <property type="protein sequence ID" value="AAM26192.1"/>
    <property type="molecule type" value="Genomic_DNA"/>
</dbReference>
<dbReference type="EMBL" id="AE017335">
    <property type="protein sequence ID" value="AAT28962.2"/>
    <property type="molecule type" value="Genomic_DNA"/>
</dbReference>
<dbReference type="RefSeq" id="NP_053188.1">
    <property type="nucleotide sequence ID" value="NC_002146.1"/>
</dbReference>
<dbReference type="RefSeq" id="WP_000061608.1">
    <property type="nucleotide sequence ID" value="NZ_VTZL01000009.1"/>
</dbReference>
<dbReference type="GeneID" id="45025344"/>
<dbReference type="KEGG" id="banh:HYU01_29170"/>
<dbReference type="KEGG" id="bar:GBAA_pXO2_0032"/>
<dbReference type="HOGENOM" id="CLU_108360_0_0_9"/>
<dbReference type="OMA" id="LTEYMIT"/>
<dbReference type="Proteomes" id="UP000000594">
    <property type="component" value="Plasmid pXO2"/>
</dbReference>
<proteinExistence type="predicted"/>
<feature type="chain" id="PRO_0000216847" description="Uncharacterized protein pXO2-33/BXB0032/GBAA_pXO2_0032">
    <location>
        <begin position="1"/>
        <end position="176"/>
    </location>
</feature>
<reference key="1">
    <citation type="journal article" date="1999" name="J. Appl. Microbiol.">
        <title>Sequence, assembly and analysis of pXO1 and pXO2.</title>
        <authorList>
            <person name="Okinaka R.T."/>
            <person name="Cloud K."/>
            <person name="Hampton O."/>
            <person name="Hoffmaster A."/>
            <person name="Hill K.K."/>
            <person name="Keim P."/>
            <person name="Koehler T."/>
            <person name="Lamke G."/>
            <person name="Kumano S."/>
            <person name="Manter D."/>
            <person name="Martinez Y."/>
            <person name="Ricke D."/>
            <person name="Svensson R."/>
            <person name="Jackson P.J."/>
        </authorList>
    </citation>
    <scope>NUCLEOTIDE SEQUENCE [GENOMIC DNA]</scope>
    <source>
        <strain>Pasteur</strain>
    </source>
</reference>
<reference key="2">
    <citation type="journal article" date="2002" name="Science">
        <title>Comparative genome sequencing for discovery of novel polymorphisms in Bacillus anthracis.</title>
        <authorList>
            <person name="Read T.D."/>
            <person name="Salzberg S.L."/>
            <person name="Pop M."/>
            <person name="Shumway M.F."/>
            <person name="Umayam L."/>
            <person name="Jiang L."/>
            <person name="Holtzapple E."/>
            <person name="Busch J.D."/>
            <person name="Smith K.L."/>
            <person name="Schupp J.M."/>
            <person name="Solomon D."/>
            <person name="Keim P."/>
            <person name="Fraser C.M."/>
        </authorList>
    </citation>
    <scope>NUCLEOTIDE SEQUENCE [GENOMIC DNA]</scope>
    <source>
        <strain>Ames / isolate Florida / A2012</strain>
    </source>
</reference>
<reference key="3">
    <citation type="journal article" date="2009" name="J. Bacteriol.">
        <title>The complete genome sequence of Bacillus anthracis Ames 'Ancestor'.</title>
        <authorList>
            <person name="Ravel J."/>
            <person name="Jiang L."/>
            <person name="Stanley S.T."/>
            <person name="Wilson M.R."/>
            <person name="Decker R.S."/>
            <person name="Read T.D."/>
            <person name="Worsham P."/>
            <person name="Keim P.S."/>
            <person name="Salzberg S.L."/>
            <person name="Fraser-Liggett C.M."/>
            <person name="Rasko D.A."/>
        </authorList>
    </citation>
    <scope>NUCLEOTIDE SEQUENCE [LARGE SCALE GENOMIC DNA]</scope>
    <source>
        <strain>Ames ancestor</strain>
    </source>
</reference>
<name>Y6532_BACAN</name>